<gene>
    <name evidence="1" type="primary">trmA</name>
    <name type="ordered locus">APP7_2067</name>
</gene>
<accession>B3GZC6</accession>
<keyword id="KW-0489">Methyltransferase</keyword>
<keyword id="KW-0949">S-adenosyl-L-methionine</keyword>
<keyword id="KW-0808">Transferase</keyword>
<keyword id="KW-0819">tRNA processing</keyword>
<dbReference type="EC" id="2.1.1.-" evidence="1"/>
<dbReference type="EC" id="2.1.1.35" evidence="1"/>
<dbReference type="EMBL" id="CP001091">
    <property type="protein sequence ID" value="ACE62719.1"/>
    <property type="molecule type" value="Genomic_DNA"/>
</dbReference>
<dbReference type="RefSeq" id="WP_005602891.1">
    <property type="nucleotide sequence ID" value="NC_010939.1"/>
</dbReference>
<dbReference type="SMR" id="B3GZC6"/>
<dbReference type="KEGG" id="apa:APP7_2067"/>
<dbReference type="HOGENOM" id="CLU_043022_0_0_6"/>
<dbReference type="Proteomes" id="UP000001226">
    <property type="component" value="Chromosome"/>
</dbReference>
<dbReference type="GO" id="GO:0005829">
    <property type="term" value="C:cytosol"/>
    <property type="evidence" value="ECO:0007669"/>
    <property type="project" value="TreeGrafter"/>
</dbReference>
<dbReference type="GO" id="GO:0019843">
    <property type="term" value="F:rRNA binding"/>
    <property type="evidence" value="ECO:0007669"/>
    <property type="project" value="TreeGrafter"/>
</dbReference>
<dbReference type="GO" id="GO:0030697">
    <property type="term" value="F:tRNA (uracil(54)-C5)-methyltransferase activity, S-adenosyl methionine-dependent"/>
    <property type="evidence" value="ECO:0007669"/>
    <property type="project" value="UniProtKB-UniRule"/>
</dbReference>
<dbReference type="GO" id="GO:0000049">
    <property type="term" value="F:tRNA binding"/>
    <property type="evidence" value="ECO:0007669"/>
    <property type="project" value="TreeGrafter"/>
</dbReference>
<dbReference type="GO" id="GO:0030488">
    <property type="term" value="P:tRNA methylation"/>
    <property type="evidence" value="ECO:0007669"/>
    <property type="project" value="UniProtKB-UniRule"/>
</dbReference>
<dbReference type="CDD" id="cd02440">
    <property type="entry name" value="AdoMet_MTases"/>
    <property type="match status" value="1"/>
</dbReference>
<dbReference type="FunFam" id="2.40.50.1070:FF:000001">
    <property type="entry name" value="tRNA/tmRNA (uracil-C(5))-methyltransferase"/>
    <property type="match status" value="1"/>
</dbReference>
<dbReference type="FunFam" id="3.40.50.150:FF:000012">
    <property type="entry name" value="tRNA/tmRNA (uracil-C(5))-methyltransferase"/>
    <property type="match status" value="1"/>
</dbReference>
<dbReference type="Gene3D" id="2.40.50.1070">
    <property type="match status" value="1"/>
</dbReference>
<dbReference type="Gene3D" id="3.40.50.150">
    <property type="entry name" value="Vaccinia Virus protein VP39"/>
    <property type="match status" value="1"/>
</dbReference>
<dbReference type="HAMAP" id="MF_01011">
    <property type="entry name" value="RNA_methyltr_TrmA"/>
    <property type="match status" value="1"/>
</dbReference>
<dbReference type="InterPro" id="IPR030390">
    <property type="entry name" value="MeTrfase_TrmA_AS"/>
</dbReference>
<dbReference type="InterPro" id="IPR030391">
    <property type="entry name" value="MeTrfase_TrmA_CS"/>
</dbReference>
<dbReference type="InterPro" id="IPR029063">
    <property type="entry name" value="SAM-dependent_MTases_sf"/>
</dbReference>
<dbReference type="InterPro" id="IPR011869">
    <property type="entry name" value="TrmA_MeTrfase"/>
</dbReference>
<dbReference type="InterPro" id="IPR010280">
    <property type="entry name" value="U5_MeTrfase_fam"/>
</dbReference>
<dbReference type="NCBIfam" id="TIGR02143">
    <property type="entry name" value="trmA_only"/>
    <property type="match status" value="1"/>
</dbReference>
<dbReference type="PANTHER" id="PTHR47790">
    <property type="entry name" value="TRNA/TMRNA (URACIL-C(5))-METHYLTRANSFERASE"/>
    <property type="match status" value="1"/>
</dbReference>
<dbReference type="PANTHER" id="PTHR47790:SF2">
    <property type="entry name" value="TRNA_TMRNA (URACIL-C(5))-METHYLTRANSFERASE"/>
    <property type="match status" value="1"/>
</dbReference>
<dbReference type="Pfam" id="PF05958">
    <property type="entry name" value="tRNA_U5-meth_tr"/>
    <property type="match status" value="1"/>
</dbReference>
<dbReference type="SUPFAM" id="SSF53335">
    <property type="entry name" value="S-adenosyl-L-methionine-dependent methyltransferases"/>
    <property type="match status" value="1"/>
</dbReference>
<dbReference type="PROSITE" id="PS51687">
    <property type="entry name" value="SAM_MT_RNA_M5U"/>
    <property type="match status" value="1"/>
</dbReference>
<dbReference type="PROSITE" id="PS01230">
    <property type="entry name" value="TRMA_1"/>
    <property type="match status" value="1"/>
</dbReference>
<dbReference type="PROSITE" id="PS01231">
    <property type="entry name" value="TRMA_2"/>
    <property type="match status" value="1"/>
</dbReference>
<comment type="function">
    <text evidence="1">Dual-specificity methyltransferase that catalyzes the formation of 5-methyluridine at position 54 (m5U54) in all tRNAs, and that of position 341 (m5U341) in tmRNA (transfer-mRNA).</text>
</comment>
<comment type="catalytic activity">
    <reaction evidence="1">
        <text>uridine(54) in tRNA + S-adenosyl-L-methionine = 5-methyluridine(54) in tRNA + S-adenosyl-L-homocysteine + H(+)</text>
        <dbReference type="Rhea" id="RHEA:42712"/>
        <dbReference type="Rhea" id="RHEA-COMP:10167"/>
        <dbReference type="Rhea" id="RHEA-COMP:10193"/>
        <dbReference type="ChEBI" id="CHEBI:15378"/>
        <dbReference type="ChEBI" id="CHEBI:57856"/>
        <dbReference type="ChEBI" id="CHEBI:59789"/>
        <dbReference type="ChEBI" id="CHEBI:65315"/>
        <dbReference type="ChEBI" id="CHEBI:74447"/>
        <dbReference type="EC" id="2.1.1.35"/>
    </reaction>
</comment>
<comment type="catalytic activity">
    <reaction evidence="1">
        <text>uridine(341) in tmRNA + S-adenosyl-L-methionine = 5-methyluridine(341) in tmRNA + S-adenosyl-L-homocysteine + H(+)</text>
        <dbReference type="Rhea" id="RHEA:43612"/>
        <dbReference type="Rhea" id="RHEA-COMP:10630"/>
        <dbReference type="Rhea" id="RHEA-COMP:10631"/>
        <dbReference type="ChEBI" id="CHEBI:15378"/>
        <dbReference type="ChEBI" id="CHEBI:57856"/>
        <dbReference type="ChEBI" id="CHEBI:59789"/>
        <dbReference type="ChEBI" id="CHEBI:65315"/>
        <dbReference type="ChEBI" id="CHEBI:74447"/>
    </reaction>
</comment>
<comment type="similarity">
    <text evidence="1">Belongs to the class I-like SAM-binding methyltransferase superfamily. RNA M5U methyltransferase family. TrmA subfamily.</text>
</comment>
<evidence type="ECO:0000255" key="1">
    <source>
        <dbReference type="HAMAP-Rule" id="MF_01011"/>
    </source>
</evidence>
<reference key="1">
    <citation type="submission" date="2008-06" db="EMBL/GenBank/DDBJ databases">
        <title>Genome and proteome analysis of A. pleuropneumoniae serotype 7.</title>
        <authorList>
            <person name="Linke B."/>
            <person name="Buettner F."/>
            <person name="Martinez-Arias R."/>
            <person name="Goesmann A."/>
            <person name="Baltes N."/>
            <person name="Tegetmeyer H."/>
            <person name="Singh M."/>
            <person name="Gerlach G.F."/>
        </authorList>
    </citation>
    <scope>NUCLEOTIDE SEQUENCE [LARGE SCALE GENOMIC DNA]</scope>
    <source>
        <strain>AP76</strain>
    </source>
</reference>
<proteinExistence type="inferred from homology"/>
<organism>
    <name type="scientific">Actinobacillus pleuropneumoniae serotype 7 (strain AP76)</name>
    <dbReference type="NCBI Taxonomy" id="537457"/>
    <lineage>
        <taxon>Bacteria</taxon>
        <taxon>Pseudomonadati</taxon>
        <taxon>Pseudomonadota</taxon>
        <taxon>Gammaproteobacteria</taxon>
        <taxon>Pasteurellales</taxon>
        <taxon>Pasteurellaceae</taxon>
        <taxon>Actinobacillus</taxon>
    </lineage>
</organism>
<name>TRMA_ACTP7</name>
<sequence length="368" mass="42630">MNLPIERYADLLAEKAKNLTALLVPFNPPELEVFESETSHFRMRAEFRVWHDTNEVGENELYHIMFDQETKQRYRVEQFPIANHLINKMMSSLLAEIKGNELLTRKLFQVDYLSTLSGEIAVSMLYHKKLNEEWQAEAAALKARLEHQGFKVQIIGRATKQKIALDRDYVEEVLPVDGRNLIYRQVENSFTQPNAKMNIKMLEWARSCTRHSSGDLLELYCGNGNFSIALAENFRQVLATEISKSSVQSAQYNIEQNGIDNLQIIRMSAEEFTQAMNGVREFNRLKGIDLKAYDCNTIFVDPPRAGLDQDTLNMVQAYERILYISCNPYTLAENLRQLSLTHRIERAALFDQFPYTHHVESGVWLIRK</sequence>
<protein>
    <recommendedName>
        <fullName evidence="1">tRNA/tmRNA (uracil-C(5))-methyltransferase</fullName>
        <ecNumber evidence="1">2.1.1.-</ecNumber>
        <ecNumber evidence="1">2.1.1.35</ecNumber>
    </recommendedName>
    <alternativeName>
        <fullName evidence="1">tRNA (uracil(54)-C(5))-methyltransferase</fullName>
    </alternativeName>
    <alternativeName>
        <fullName evidence="1">tRNA(m5U54)-methyltransferase</fullName>
        <shortName evidence="1">RUMT</shortName>
    </alternativeName>
    <alternativeName>
        <fullName evidence="1">tmRNA (uracil(341)-C(5))-methyltransferase</fullName>
    </alternativeName>
</protein>
<feature type="chain" id="PRO_1000198534" description="tRNA/tmRNA (uracil-C(5))-methyltransferase">
    <location>
        <begin position="1"/>
        <end position="368"/>
    </location>
</feature>
<feature type="active site" description="Nucleophile" evidence="1">
    <location>
        <position position="326"/>
    </location>
</feature>
<feature type="active site" description="Proton acceptor" evidence="1">
    <location>
        <position position="360"/>
    </location>
</feature>
<feature type="binding site" evidence="1">
    <location>
        <position position="192"/>
    </location>
    <ligand>
        <name>S-adenosyl-L-methionine</name>
        <dbReference type="ChEBI" id="CHEBI:59789"/>
    </ligand>
</feature>
<feature type="binding site" evidence="1">
    <location>
        <position position="220"/>
    </location>
    <ligand>
        <name>S-adenosyl-L-methionine</name>
        <dbReference type="ChEBI" id="CHEBI:59789"/>
    </ligand>
</feature>
<feature type="binding site" evidence="1">
    <location>
        <position position="225"/>
    </location>
    <ligand>
        <name>S-adenosyl-L-methionine</name>
        <dbReference type="ChEBI" id="CHEBI:59789"/>
    </ligand>
</feature>
<feature type="binding site" evidence="1">
    <location>
        <position position="241"/>
    </location>
    <ligand>
        <name>S-adenosyl-L-methionine</name>
        <dbReference type="ChEBI" id="CHEBI:59789"/>
    </ligand>
</feature>
<feature type="binding site" evidence="1">
    <location>
        <position position="301"/>
    </location>
    <ligand>
        <name>S-adenosyl-L-methionine</name>
        <dbReference type="ChEBI" id="CHEBI:59789"/>
    </ligand>
</feature>